<gene>
    <name evidence="1" type="primary">hflD</name>
    <name type="ordered locus">NTHI0757</name>
</gene>
<organism>
    <name type="scientific">Haemophilus influenzae (strain 86-028NP)</name>
    <dbReference type="NCBI Taxonomy" id="281310"/>
    <lineage>
        <taxon>Bacteria</taxon>
        <taxon>Pseudomonadati</taxon>
        <taxon>Pseudomonadota</taxon>
        <taxon>Gammaproteobacteria</taxon>
        <taxon>Pasteurellales</taxon>
        <taxon>Pasteurellaceae</taxon>
        <taxon>Haemophilus</taxon>
    </lineage>
</organism>
<evidence type="ECO:0000255" key="1">
    <source>
        <dbReference type="HAMAP-Rule" id="MF_00695"/>
    </source>
</evidence>
<sequence length="205" mass="23221">MKNYHDIVLALAGVCQSAKLVHQLATESRADSDTFLTALNSLFITQPQRIEDVFGGEVRHLKLGLETLIHQLNAQGDQNLTRYWLSLLALEGKLSKNSDAKQTLGNRISRLKEQEIHYARDSETMLSIMANIYSDIISPLGKKIHILGSPDYLRQELVQNKIRAVLLAGIRSAVLWKQMGGTKWQILFFRRKLLATAKQIYSSIY</sequence>
<name>HFLD_HAEI8</name>
<protein>
    <recommendedName>
        <fullName evidence="1">High frequency lysogenization protein HflD homolog</fullName>
    </recommendedName>
</protein>
<keyword id="KW-0997">Cell inner membrane</keyword>
<keyword id="KW-1003">Cell membrane</keyword>
<keyword id="KW-0963">Cytoplasm</keyword>
<keyword id="KW-0472">Membrane</keyword>
<accession>Q4QMS9</accession>
<proteinExistence type="inferred from homology"/>
<feature type="chain" id="PRO_1000045420" description="High frequency lysogenization protein HflD homolog">
    <location>
        <begin position="1"/>
        <end position="205"/>
    </location>
</feature>
<reference key="1">
    <citation type="journal article" date="2005" name="J. Bacteriol.">
        <title>Genomic sequence of an otitis media isolate of nontypeable Haemophilus influenzae: comparative study with H. influenzae serotype d, strain KW20.</title>
        <authorList>
            <person name="Harrison A."/>
            <person name="Dyer D.W."/>
            <person name="Gillaspy A."/>
            <person name="Ray W.C."/>
            <person name="Mungur R."/>
            <person name="Carson M.B."/>
            <person name="Zhong H."/>
            <person name="Gipson J."/>
            <person name="Gipson M."/>
            <person name="Johnson L.S."/>
            <person name="Lewis L."/>
            <person name="Bakaletz L.O."/>
            <person name="Munson R.S. Jr."/>
        </authorList>
    </citation>
    <scope>NUCLEOTIDE SEQUENCE [LARGE SCALE GENOMIC DNA]</scope>
    <source>
        <strain>86-028NP</strain>
    </source>
</reference>
<dbReference type="EMBL" id="CP000057">
    <property type="protein sequence ID" value="AAX87668.1"/>
    <property type="molecule type" value="Genomic_DNA"/>
</dbReference>
<dbReference type="RefSeq" id="WP_005658704.1">
    <property type="nucleotide sequence ID" value="NC_007146.2"/>
</dbReference>
<dbReference type="SMR" id="Q4QMS9"/>
<dbReference type="KEGG" id="hit:NTHI0757"/>
<dbReference type="HOGENOM" id="CLU_098920_0_0_6"/>
<dbReference type="Proteomes" id="UP000002525">
    <property type="component" value="Chromosome"/>
</dbReference>
<dbReference type="GO" id="GO:0005737">
    <property type="term" value="C:cytoplasm"/>
    <property type="evidence" value="ECO:0007669"/>
    <property type="project" value="UniProtKB-SubCell"/>
</dbReference>
<dbReference type="GO" id="GO:0005886">
    <property type="term" value="C:plasma membrane"/>
    <property type="evidence" value="ECO:0007669"/>
    <property type="project" value="UniProtKB-SubCell"/>
</dbReference>
<dbReference type="FunFam" id="1.10.3890.10:FF:000001">
    <property type="entry name" value="High frequency lysogenization protein HflD homolog"/>
    <property type="match status" value="1"/>
</dbReference>
<dbReference type="Gene3D" id="1.10.3890.10">
    <property type="entry name" value="HflD-like"/>
    <property type="match status" value="1"/>
</dbReference>
<dbReference type="HAMAP" id="MF_00695">
    <property type="entry name" value="HflD_protein"/>
    <property type="match status" value="1"/>
</dbReference>
<dbReference type="InterPro" id="IPR007451">
    <property type="entry name" value="HflD"/>
</dbReference>
<dbReference type="InterPro" id="IPR035932">
    <property type="entry name" value="HflD-like_sf"/>
</dbReference>
<dbReference type="NCBIfam" id="NF001246">
    <property type="entry name" value="PRK00218.1-2"/>
    <property type="match status" value="1"/>
</dbReference>
<dbReference type="NCBIfam" id="NF001248">
    <property type="entry name" value="PRK00218.1-4"/>
    <property type="match status" value="1"/>
</dbReference>
<dbReference type="PANTHER" id="PTHR38100">
    <property type="entry name" value="HIGH FREQUENCY LYSOGENIZATION PROTEIN HFLD"/>
    <property type="match status" value="1"/>
</dbReference>
<dbReference type="PANTHER" id="PTHR38100:SF1">
    <property type="entry name" value="HIGH FREQUENCY LYSOGENIZATION PROTEIN HFLD"/>
    <property type="match status" value="1"/>
</dbReference>
<dbReference type="Pfam" id="PF04356">
    <property type="entry name" value="DUF489"/>
    <property type="match status" value="1"/>
</dbReference>
<dbReference type="SUPFAM" id="SSF101322">
    <property type="entry name" value="YcfC-like"/>
    <property type="match status" value="1"/>
</dbReference>
<comment type="subcellular location">
    <subcellularLocation>
        <location>Cytoplasm</location>
    </subcellularLocation>
    <subcellularLocation>
        <location evidence="1">Cell inner membrane</location>
        <topology evidence="1">Peripheral membrane protein</topology>
        <orientation evidence="1">Cytoplasmic side</orientation>
    </subcellularLocation>
</comment>
<comment type="similarity">
    <text evidence="1">Belongs to the HflD family.</text>
</comment>